<reference key="1">
    <citation type="journal article" date="2007" name="Proc. Natl. Acad. Sci. U.S.A.">
        <title>E-Syts, a family of membranous Ca2+-sensor proteins with multiple C2 domains.</title>
        <authorList>
            <person name="Min S.-W."/>
            <person name="Chang W.-P."/>
            <person name="Suedhof T.C."/>
        </authorList>
    </citation>
    <scope>NUCLEOTIDE SEQUENCE [MRNA] (ISOFORM 1)</scope>
    <scope>SUBCELLULAR LOCATION</scope>
    <scope>TISSUE SPECIFICITY</scope>
</reference>
<reference key="2">
    <citation type="journal article" date="2004" name="Nat. Genet.">
        <title>Complete sequencing and characterization of 21,243 full-length human cDNAs.</title>
        <authorList>
            <person name="Ota T."/>
            <person name="Suzuki Y."/>
            <person name="Nishikawa T."/>
            <person name="Otsuki T."/>
            <person name="Sugiyama T."/>
            <person name="Irie R."/>
            <person name="Wakamatsu A."/>
            <person name="Hayashi K."/>
            <person name="Sato H."/>
            <person name="Nagai K."/>
            <person name="Kimura K."/>
            <person name="Makita H."/>
            <person name="Sekine M."/>
            <person name="Obayashi M."/>
            <person name="Nishi T."/>
            <person name="Shibahara T."/>
            <person name="Tanaka T."/>
            <person name="Ishii S."/>
            <person name="Yamamoto J."/>
            <person name="Saito K."/>
            <person name="Kawai Y."/>
            <person name="Isono Y."/>
            <person name="Nakamura Y."/>
            <person name="Nagahari K."/>
            <person name="Murakami K."/>
            <person name="Yasuda T."/>
            <person name="Iwayanagi T."/>
            <person name="Wagatsuma M."/>
            <person name="Shiratori A."/>
            <person name="Sudo H."/>
            <person name="Hosoiri T."/>
            <person name="Kaku Y."/>
            <person name="Kodaira H."/>
            <person name="Kondo H."/>
            <person name="Sugawara M."/>
            <person name="Takahashi M."/>
            <person name="Kanda K."/>
            <person name="Yokoi T."/>
            <person name="Furuya T."/>
            <person name="Kikkawa E."/>
            <person name="Omura Y."/>
            <person name="Abe K."/>
            <person name="Kamihara K."/>
            <person name="Katsuta N."/>
            <person name="Sato K."/>
            <person name="Tanikawa M."/>
            <person name="Yamazaki M."/>
            <person name="Ninomiya K."/>
            <person name="Ishibashi T."/>
            <person name="Yamashita H."/>
            <person name="Murakawa K."/>
            <person name="Fujimori K."/>
            <person name="Tanai H."/>
            <person name="Kimata M."/>
            <person name="Watanabe M."/>
            <person name="Hiraoka S."/>
            <person name="Chiba Y."/>
            <person name="Ishida S."/>
            <person name="Ono Y."/>
            <person name="Takiguchi S."/>
            <person name="Watanabe S."/>
            <person name="Yosida M."/>
            <person name="Hotuta T."/>
            <person name="Kusano J."/>
            <person name="Kanehori K."/>
            <person name="Takahashi-Fujii A."/>
            <person name="Hara H."/>
            <person name="Tanase T.-O."/>
            <person name="Nomura Y."/>
            <person name="Togiya S."/>
            <person name="Komai F."/>
            <person name="Hara R."/>
            <person name="Takeuchi K."/>
            <person name="Arita M."/>
            <person name="Imose N."/>
            <person name="Musashino K."/>
            <person name="Yuuki H."/>
            <person name="Oshima A."/>
            <person name="Sasaki N."/>
            <person name="Aotsuka S."/>
            <person name="Yoshikawa Y."/>
            <person name="Matsunawa H."/>
            <person name="Ichihara T."/>
            <person name="Shiohata N."/>
            <person name="Sano S."/>
            <person name="Moriya S."/>
            <person name="Momiyama H."/>
            <person name="Satoh N."/>
            <person name="Takami S."/>
            <person name="Terashima Y."/>
            <person name="Suzuki O."/>
            <person name="Nakagawa S."/>
            <person name="Senoh A."/>
            <person name="Mizoguchi H."/>
            <person name="Goto Y."/>
            <person name="Shimizu F."/>
            <person name="Wakebe H."/>
            <person name="Hishigaki H."/>
            <person name="Watanabe T."/>
            <person name="Sugiyama A."/>
            <person name="Takemoto M."/>
            <person name="Kawakami B."/>
            <person name="Yamazaki M."/>
            <person name="Watanabe K."/>
            <person name="Kumagai A."/>
            <person name="Itakura S."/>
            <person name="Fukuzumi Y."/>
            <person name="Fujimori Y."/>
            <person name="Komiyama M."/>
            <person name="Tashiro H."/>
            <person name="Tanigami A."/>
            <person name="Fujiwara T."/>
            <person name="Ono T."/>
            <person name="Yamada K."/>
            <person name="Fujii Y."/>
            <person name="Ozaki K."/>
            <person name="Hirao M."/>
            <person name="Ohmori Y."/>
            <person name="Kawabata A."/>
            <person name="Hikiji T."/>
            <person name="Kobatake N."/>
            <person name="Inagaki H."/>
            <person name="Ikema Y."/>
            <person name="Okamoto S."/>
            <person name="Okitani R."/>
            <person name="Kawakami T."/>
            <person name="Noguchi S."/>
            <person name="Itoh T."/>
            <person name="Shigeta K."/>
            <person name="Senba T."/>
            <person name="Matsumura K."/>
            <person name="Nakajima Y."/>
            <person name="Mizuno T."/>
            <person name="Morinaga M."/>
            <person name="Sasaki M."/>
            <person name="Togashi T."/>
            <person name="Oyama M."/>
            <person name="Hata H."/>
            <person name="Watanabe M."/>
            <person name="Komatsu T."/>
            <person name="Mizushima-Sugano J."/>
            <person name="Satoh T."/>
            <person name="Shirai Y."/>
            <person name="Takahashi Y."/>
            <person name="Nakagawa K."/>
            <person name="Okumura K."/>
            <person name="Nagase T."/>
            <person name="Nomura N."/>
            <person name="Kikuchi H."/>
            <person name="Masuho Y."/>
            <person name="Yamashita R."/>
            <person name="Nakai K."/>
            <person name="Yada T."/>
            <person name="Nakamura Y."/>
            <person name="Ohara O."/>
            <person name="Isogai T."/>
            <person name="Sugano S."/>
        </authorList>
    </citation>
    <scope>NUCLEOTIDE SEQUENCE [LARGE SCALE MRNA] (ISOFORM 1)</scope>
    <source>
        <tissue>Hepatoma</tissue>
        <tissue>Kidney</tissue>
        <tissue>Tongue</tissue>
    </source>
</reference>
<reference key="3">
    <citation type="submission" date="2005-07" db="EMBL/GenBank/DDBJ databases">
        <authorList>
            <person name="Mural R.J."/>
            <person name="Istrail S."/>
            <person name="Sutton G.G."/>
            <person name="Florea L."/>
            <person name="Halpern A.L."/>
            <person name="Mobarry C.M."/>
            <person name="Lippert R."/>
            <person name="Walenz B."/>
            <person name="Shatkay H."/>
            <person name="Dew I."/>
            <person name="Miller J.R."/>
            <person name="Flanigan M.J."/>
            <person name="Edwards N.J."/>
            <person name="Bolanos R."/>
            <person name="Fasulo D."/>
            <person name="Halldorsson B.V."/>
            <person name="Hannenhalli S."/>
            <person name="Turner R."/>
            <person name="Yooseph S."/>
            <person name="Lu F."/>
            <person name="Nusskern D.R."/>
            <person name="Shue B.C."/>
            <person name="Zheng X.H."/>
            <person name="Zhong F."/>
            <person name="Delcher A.L."/>
            <person name="Huson D.H."/>
            <person name="Kravitz S.A."/>
            <person name="Mouchard L."/>
            <person name="Reinert K."/>
            <person name="Remington K.A."/>
            <person name="Clark A.G."/>
            <person name="Waterman M.S."/>
            <person name="Eichler E.E."/>
            <person name="Adams M.D."/>
            <person name="Hunkapiller M.W."/>
            <person name="Myers E.W."/>
            <person name="Venter J.C."/>
        </authorList>
    </citation>
    <scope>NUCLEOTIDE SEQUENCE [LARGE SCALE GENOMIC DNA]</scope>
</reference>
<reference key="4">
    <citation type="journal article" date="2004" name="Genome Res.">
        <title>The status, quality, and expansion of the NIH full-length cDNA project: the Mammalian Gene Collection (MGC).</title>
        <authorList>
            <consortium name="The MGC Project Team"/>
        </authorList>
    </citation>
    <scope>NUCLEOTIDE SEQUENCE [LARGE SCALE MRNA] (ISOFORM 1)</scope>
    <source>
        <tissue>Kidney</tissue>
    </source>
</reference>
<reference key="5">
    <citation type="journal article" date="1998" name="DNA Res.">
        <title>Prediction of the coding sequences of unidentified human genes. XI. The complete sequences of 100 new cDNA clones from brain which code for large proteins in vitro.</title>
        <authorList>
            <person name="Nagase T."/>
            <person name="Ishikawa K."/>
            <person name="Suyama M."/>
            <person name="Kikuno R."/>
            <person name="Miyajima N."/>
            <person name="Tanaka A."/>
            <person name="Kotani H."/>
            <person name="Nomura N."/>
            <person name="Ohara O."/>
        </authorList>
    </citation>
    <scope>NUCLEOTIDE SEQUENCE [LARGE SCALE MRNA] OF 43-1104 (ISOFORM 2)</scope>
    <source>
        <tissue>Brain</tissue>
    </source>
</reference>
<reference key="6">
    <citation type="submission" date="2005-11" db="UniProtKB">
        <authorList>
            <person name="Bienvenut W.V."/>
            <person name="Claeys D."/>
        </authorList>
    </citation>
    <scope>PROTEIN SEQUENCE OF 308-323; 446-457 AND 551-586</scope>
    <scope>IDENTIFICATION BY MASS SPECTROMETRY</scope>
    <source>
        <tissue>B-cell lymphoma</tissue>
        <tissue>Platelet</tissue>
    </source>
</reference>
<reference key="7">
    <citation type="journal article" date="2007" name="BMC Genomics">
        <title>The full-ORF clone resource of the German cDNA consortium.</title>
        <authorList>
            <person name="Bechtel S."/>
            <person name="Rosenfelder H."/>
            <person name="Duda A."/>
            <person name="Schmidt C.P."/>
            <person name="Ernst U."/>
            <person name="Wellenreuther R."/>
            <person name="Mehrle A."/>
            <person name="Schuster C."/>
            <person name="Bahr A."/>
            <person name="Bloecker H."/>
            <person name="Heubner D."/>
            <person name="Hoerlein A."/>
            <person name="Michel G."/>
            <person name="Wedler H."/>
            <person name="Koehrer K."/>
            <person name="Ottenwaelder B."/>
            <person name="Poustka A."/>
            <person name="Wiemann S."/>
            <person name="Schupp I."/>
        </authorList>
    </citation>
    <scope>NUCLEOTIDE SEQUENCE [LARGE SCALE MRNA] OF 379-1104 (ISOFORM 1)</scope>
    <source>
        <tissue>Uterus</tissue>
    </source>
</reference>
<reference key="8">
    <citation type="journal article" date="2005" name="Nat. Biotechnol.">
        <title>Immunoaffinity profiling of tyrosine phosphorylation in cancer cells.</title>
        <authorList>
            <person name="Rush J."/>
            <person name="Moritz A."/>
            <person name="Lee K.A."/>
            <person name="Guo A."/>
            <person name="Goss V.L."/>
            <person name="Spek E.J."/>
            <person name="Zhang H."/>
            <person name="Zha X.-M."/>
            <person name="Polakiewicz R.D."/>
            <person name="Comb M.J."/>
        </authorList>
    </citation>
    <scope>IDENTIFICATION BY MASS SPECTROMETRY [LARGE SCALE ANALYSIS]</scope>
</reference>
<reference key="9">
    <citation type="journal article" date="2008" name="Proc. Natl. Acad. Sci. U.S.A.">
        <title>A quantitative atlas of mitotic phosphorylation.</title>
        <authorList>
            <person name="Dephoure N."/>
            <person name="Zhou C."/>
            <person name="Villen J."/>
            <person name="Beausoleil S.A."/>
            <person name="Bakalarski C.E."/>
            <person name="Elledge S.J."/>
            <person name="Gygi S.P."/>
        </authorList>
    </citation>
    <scope>PHOSPHORYLATION [LARGE SCALE ANALYSIS] AT SER-963 AND SER-1034</scope>
    <scope>IDENTIFICATION BY MASS SPECTROMETRY [LARGE SCALE ANALYSIS]</scope>
    <source>
        <tissue>Cervix carcinoma</tissue>
    </source>
</reference>
<reference key="10">
    <citation type="journal article" date="2009" name="Anal. Chem.">
        <title>Lys-N and trypsin cover complementary parts of the phosphoproteome in a refined SCX-based approach.</title>
        <authorList>
            <person name="Gauci S."/>
            <person name="Helbig A.O."/>
            <person name="Slijper M."/>
            <person name="Krijgsveld J."/>
            <person name="Heck A.J."/>
            <person name="Mohammed S."/>
        </authorList>
    </citation>
    <scope>ACETYLATION [LARGE SCALE ANALYSIS] AT MET-1</scope>
    <scope>IDENTIFICATION BY MASS SPECTROMETRY [LARGE SCALE ANALYSIS]</scope>
</reference>
<reference key="11">
    <citation type="journal article" date="2009" name="Sci. Signal.">
        <title>Quantitative phosphoproteomic analysis of T cell receptor signaling reveals system-wide modulation of protein-protein interactions.</title>
        <authorList>
            <person name="Mayya V."/>
            <person name="Lundgren D.H."/>
            <person name="Hwang S.-I."/>
            <person name="Rezaul K."/>
            <person name="Wu L."/>
            <person name="Eng J.K."/>
            <person name="Rodionov V."/>
            <person name="Han D.K."/>
        </authorList>
    </citation>
    <scope>IDENTIFICATION BY MASS SPECTROMETRY [LARGE SCALE ANALYSIS]</scope>
    <source>
        <tissue>Leukemic T-cell</tissue>
    </source>
</reference>
<reference key="12">
    <citation type="journal article" date="2009" name="Science">
        <title>Lysine acetylation targets protein complexes and co-regulates major cellular functions.</title>
        <authorList>
            <person name="Choudhary C."/>
            <person name="Kumar C."/>
            <person name="Gnad F."/>
            <person name="Nielsen M.L."/>
            <person name="Rehman M."/>
            <person name="Walther T.C."/>
            <person name="Olsen J.V."/>
            <person name="Mann M."/>
        </authorList>
    </citation>
    <scope>ACETYLATION [LARGE SCALE ANALYSIS] AT LYS-817</scope>
    <scope>IDENTIFICATION BY MASS SPECTROMETRY [LARGE SCALE ANALYSIS]</scope>
</reference>
<reference key="13">
    <citation type="journal article" date="2010" name="Sci. Signal.">
        <title>Quantitative phosphoproteomics reveals widespread full phosphorylation site occupancy during mitosis.</title>
        <authorList>
            <person name="Olsen J.V."/>
            <person name="Vermeulen M."/>
            <person name="Santamaria A."/>
            <person name="Kumar C."/>
            <person name="Miller M.L."/>
            <person name="Jensen L.J."/>
            <person name="Gnad F."/>
            <person name="Cox J."/>
            <person name="Jensen T.S."/>
            <person name="Nigg E.A."/>
            <person name="Brunak S."/>
            <person name="Mann M."/>
        </authorList>
    </citation>
    <scope>PHOSPHORYLATION [LARGE SCALE ANALYSIS] AT SER-820 AND SER-963</scope>
    <scope>IDENTIFICATION BY MASS SPECTROMETRY [LARGE SCALE ANALYSIS]</scope>
    <source>
        <tissue>Cervix carcinoma</tissue>
    </source>
</reference>
<reference key="14">
    <citation type="journal article" date="2011" name="BMC Syst. Biol.">
        <title>Initial characterization of the human central proteome.</title>
        <authorList>
            <person name="Burkard T.R."/>
            <person name="Planyavsky M."/>
            <person name="Kaupe I."/>
            <person name="Breitwieser F.P."/>
            <person name="Buerckstuemmer T."/>
            <person name="Bennett K.L."/>
            <person name="Superti-Furga G."/>
            <person name="Colinge J."/>
        </authorList>
    </citation>
    <scope>IDENTIFICATION BY MASS SPECTROMETRY [LARGE SCALE ANALYSIS]</scope>
</reference>
<reference key="15">
    <citation type="journal article" date="2012" name="J. Cell Sci.">
        <title>A conserved membrane-binding domain targets proteins to organelle contact sites.</title>
        <authorList>
            <person name="Toulmay A."/>
            <person name="Prinz W.A."/>
        </authorList>
    </citation>
    <scope>SUBCELLULAR LOCATION</scope>
</reference>
<reference key="16">
    <citation type="journal article" date="2013" name="Cell">
        <title>PI(4,5)P(2)-dependent and Ca(2+)-regulated ER-PM interactions mediated by the extended synaptotagmins.</title>
        <authorList>
            <person name="Giordano F."/>
            <person name="Saheki Y."/>
            <person name="Idevall-Hagren O."/>
            <person name="Colombo S.F."/>
            <person name="Pirruccello M."/>
            <person name="Milosevic I."/>
            <person name="Gracheva E.O."/>
            <person name="Bagriantsev S.N."/>
            <person name="Borgese N."/>
            <person name="De Camilli P."/>
        </authorList>
    </citation>
    <scope>FUNCTION</scope>
    <scope>SUBCELLULAR LOCATION</scope>
    <scope>TOPOLOGY</scope>
    <scope>LIPID-BINDING</scope>
    <scope>MUTAGENESIS OF ASP-663; ASP-675 AND 722-ASP--ASP-729</scope>
    <scope>INTERACTION WITH ESYT2 AND ESYT3</scope>
</reference>
<reference key="17">
    <citation type="journal article" date="2013" name="Cell Rep.">
        <title>Feedback regulation of receptor-induced Ca2+ signaling mediated by E-Syt1 and Nir2 at endoplasmic reticulum-plasma membrane junctions.</title>
        <authorList>
            <person name="Chang C.L."/>
            <person name="Hsieh T.S."/>
            <person name="Yang T.T."/>
            <person name="Rothberg K.G."/>
            <person name="Azizoglu D.B."/>
            <person name="Volk E."/>
            <person name="Liao J.C."/>
            <person name="Liou J."/>
        </authorList>
    </citation>
    <scope>FUNCTION</scope>
    <scope>SUBCELLULAR LOCATION</scope>
    <scope>MUTAGENESIS OF ASP-406 AND ASP-724</scope>
</reference>
<reference key="18">
    <citation type="journal article" date="2013" name="J. Proteome Res.">
        <title>Toward a comprehensive characterization of a human cancer cell phosphoproteome.</title>
        <authorList>
            <person name="Zhou H."/>
            <person name="Di Palma S."/>
            <person name="Preisinger C."/>
            <person name="Peng M."/>
            <person name="Polat A.N."/>
            <person name="Heck A.J."/>
            <person name="Mohammed S."/>
        </authorList>
    </citation>
    <scope>PHOSPHORYLATION [LARGE SCALE ANALYSIS] AT SER-820; SER-963 AND SER-1034</scope>
    <scope>IDENTIFICATION BY MASS SPECTROMETRY [LARGE SCALE ANALYSIS]</scope>
    <source>
        <tissue>Cervix carcinoma</tissue>
        <tissue>Erythroleukemia</tissue>
    </source>
</reference>
<reference key="19">
    <citation type="journal article" date="2014" name="J. Proteomics">
        <title>An enzyme assisted RP-RPLC approach for in-depth analysis of human liver phosphoproteome.</title>
        <authorList>
            <person name="Bian Y."/>
            <person name="Song C."/>
            <person name="Cheng K."/>
            <person name="Dong M."/>
            <person name="Wang F."/>
            <person name="Huang J."/>
            <person name="Sun D."/>
            <person name="Wang L."/>
            <person name="Ye M."/>
            <person name="Zou H."/>
        </authorList>
    </citation>
    <scope>PHOSPHORYLATION [LARGE SCALE ANALYSIS] AT SER-820; SER-941; THR-948; SER-949 AND SER-963</scope>
    <scope>IDENTIFICATION BY MASS SPECTROMETRY [LARGE SCALE ANALYSIS]</scope>
    <source>
        <tissue>Liver</tissue>
    </source>
</reference>
<reference key="20">
    <citation type="journal article" date="2015" name="Proteomics">
        <title>N-terminome analysis of the human mitochondrial proteome.</title>
        <authorList>
            <person name="Vaca Jacome A.S."/>
            <person name="Rabilloud T."/>
            <person name="Schaeffer-Reiss C."/>
            <person name="Rompais M."/>
            <person name="Ayoub D."/>
            <person name="Lane L."/>
            <person name="Bairoch A."/>
            <person name="Van Dorsselaer A."/>
            <person name="Carapito C."/>
        </authorList>
    </citation>
    <scope>IDENTIFICATION BY MASS SPECTROMETRY [LARGE SCALE ANALYSIS]</scope>
</reference>
<reference key="21">
    <citation type="journal article" date="2018" name="Elife">
        <title>GRAM domain proteins specialize functionally distinct ER-PM contact sites in human cells.</title>
        <authorList>
            <person name="Besprozvannaya M."/>
            <person name="Dickson E."/>
            <person name="Li H."/>
            <person name="Ginburg K.S."/>
            <person name="Bers D.M."/>
            <person name="Auwerx J."/>
            <person name="Nunnari J."/>
        </authorList>
    </citation>
    <scope>SUBCELLULAR LOCATION</scope>
</reference>
<reference key="22">
    <citation type="journal article" date="2024" name="Cell Rep.">
        <title>Modulation of GPR133 (ADGRD1) signaling by its intracellular interaction partner extended synaptotagmin 1.</title>
        <authorList>
            <person name="Stephan G."/>
            <person name="Haddock S."/>
            <person name="Wang S."/>
            <person name="Erdjument-Bromage H."/>
            <person name="Liu W."/>
            <person name="Ravn-Boess N."/>
            <person name="Frenster J.D."/>
            <person name="Bready D."/>
            <person name="Cai J."/>
            <person name="Ronnen R."/>
            <person name="Sabio-Ortiz J."/>
            <person name="Fenyo D."/>
            <person name="Neubert T.A."/>
            <person name="Placantonakis D.G."/>
        </authorList>
    </citation>
    <scope>FUNCTION</scope>
    <scope>INTERACTION WITH ADGRD1</scope>
</reference>
<organism>
    <name type="scientific">Homo sapiens</name>
    <name type="common">Human</name>
    <dbReference type="NCBI Taxonomy" id="9606"/>
    <lineage>
        <taxon>Eukaryota</taxon>
        <taxon>Metazoa</taxon>
        <taxon>Chordata</taxon>
        <taxon>Craniata</taxon>
        <taxon>Vertebrata</taxon>
        <taxon>Euteleostomi</taxon>
        <taxon>Mammalia</taxon>
        <taxon>Eutheria</taxon>
        <taxon>Euarchontoglires</taxon>
        <taxon>Primates</taxon>
        <taxon>Haplorrhini</taxon>
        <taxon>Catarrhini</taxon>
        <taxon>Hominidae</taxon>
        <taxon>Homo</taxon>
    </lineage>
</organism>
<name>ESYT1_HUMAN</name>
<protein>
    <recommendedName>
        <fullName evidence="17">Extended synaptotagmin-1</fullName>
        <shortName evidence="15">E-Syt1</shortName>
    </recommendedName>
    <alternativeName>
        <fullName>Membrane-bound C2 domain-containing protein</fullName>
    </alternativeName>
</protein>
<keyword id="KW-0007">Acetylation</keyword>
<keyword id="KW-0025">Alternative splicing</keyword>
<keyword id="KW-0106">Calcium</keyword>
<keyword id="KW-1003">Cell membrane</keyword>
<keyword id="KW-0175">Coiled coil</keyword>
<keyword id="KW-0903">Direct protein sequencing</keyword>
<keyword id="KW-0256">Endoplasmic reticulum</keyword>
<keyword id="KW-0445">Lipid transport</keyword>
<keyword id="KW-0446">Lipid-binding</keyword>
<keyword id="KW-0472">Membrane</keyword>
<keyword id="KW-0479">Metal-binding</keyword>
<keyword id="KW-0597">Phosphoprotein</keyword>
<keyword id="KW-1267">Proteomics identification</keyword>
<keyword id="KW-1185">Reference proteome</keyword>
<keyword id="KW-0677">Repeat</keyword>
<keyword id="KW-0812">Transmembrane</keyword>
<keyword id="KW-1133">Transmembrane helix</keyword>
<keyword id="KW-0813">Transport</keyword>
<feature type="chain" id="PRO_0000234344" description="Extended synaptotagmin-1">
    <location>
        <begin position="1"/>
        <end position="1104"/>
    </location>
</feature>
<feature type="topological domain" description="Cytoplasmic" evidence="5">
    <location>
        <begin position="1"/>
        <end position="38"/>
    </location>
</feature>
<feature type="transmembrane region" description="Helical" evidence="5">
    <location>
        <begin position="39"/>
        <end position="59"/>
    </location>
</feature>
<feature type="topological domain" description="Lumenal" evidence="5">
    <location>
        <begin position="60"/>
        <end position="62"/>
    </location>
</feature>
<feature type="transmembrane region" description="Helical" evidence="5">
    <location>
        <begin position="63"/>
        <end position="83"/>
    </location>
</feature>
<feature type="topological domain" description="Cytoplasmic" evidence="5">
    <location>
        <begin position="84"/>
        <end position="1104"/>
    </location>
</feature>
<feature type="domain" description="SMP-LTD" evidence="7">
    <location>
        <begin position="135"/>
        <end position="313"/>
    </location>
</feature>
<feature type="domain" description="C2 1" evidence="6">
    <location>
        <begin position="312"/>
        <end position="433"/>
    </location>
</feature>
<feature type="domain" description="C2 2" evidence="6">
    <location>
        <begin position="460"/>
        <end position="580"/>
    </location>
</feature>
<feature type="domain" description="C2 3" evidence="6">
    <location>
        <begin position="627"/>
        <end position="751"/>
    </location>
</feature>
<feature type="domain" description="C2 4" evidence="6">
    <location>
        <begin position="777"/>
        <end position="899"/>
    </location>
</feature>
<feature type="domain" description="C2 5" evidence="6">
    <location>
        <begin position="971"/>
        <end position="1093"/>
    </location>
</feature>
<feature type="region of interest" description="Disordered" evidence="8">
    <location>
        <begin position="1"/>
        <end position="48"/>
    </location>
</feature>
<feature type="region of interest" description="Disordered" evidence="8">
    <location>
        <begin position="617"/>
        <end position="641"/>
    </location>
</feature>
<feature type="region of interest" description="Disordered" evidence="8">
    <location>
        <begin position="924"/>
        <end position="950"/>
    </location>
</feature>
<feature type="region of interest" description="Required for phosphatidylinositol 4,5-bisphosphate-dependent location at the cell membrane" evidence="2">
    <location>
        <begin position="1018"/>
        <end position="1025"/>
    </location>
</feature>
<feature type="coiled-coil region" evidence="5">
    <location>
        <begin position="91"/>
        <end position="116"/>
    </location>
</feature>
<feature type="compositionally biased region" description="Gly residues" evidence="8">
    <location>
        <begin position="37"/>
        <end position="47"/>
    </location>
</feature>
<feature type="compositionally biased region" description="Low complexity" evidence="8">
    <location>
        <begin position="925"/>
        <end position="946"/>
    </location>
</feature>
<feature type="binding site" evidence="2">
    <location>
        <position position="344"/>
    </location>
    <ligand>
        <name>Ca(2+)</name>
        <dbReference type="ChEBI" id="CHEBI:29108"/>
        <label>1</label>
    </ligand>
</feature>
<feature type="binding site" evidence="2">
    <location>
        <position position="345"/>
    </location>
    <ligand>
        <name>Ca(2+)</name>
        <dbReference type="ChEBI" id="CHEBI:29108"/>
        <label>1</label>
    </ligand>
</feature>
<feature type="binding site" evidence="2">
    <location>
        <position position="345"/>
    </location>
    <ligand>
        <name>Ca(2+)</name>
        <dbReference type="ChEBI" id="CHEBI:29108"/>
        <label>2</label>
    </ligand>
</feature>
<feature type="binding site" evidence="2">
    <location>
        <position position="357"/>
    </location>
    <ligand>
        <name>Ca(2+)</name>
        <dbReference type="ChEBI" id="CHEBI:29108"/>
        <label>2</label>
    </ligand>
</feature>
<feature type="binding site" evidence="2">
    <location>
        <position position="404"/>
    </location>
    <ligand>
        <name>Ca(2+)</name>
        <dbReference type="ChEBI" id="CHEBI:29108"/>
        <label>1</label>
    </ligand>
</feature>
<feature type="binding site" evidence="2">
    <location>
        <position position="404"/>
    </location>
    <ligand>
        <name>Ca(2+)</name>
        <dbReference type="ChEBI" id="CHEBI:29108"/>
        <label>2</label>
    </ligand>
</feature>
<feature type="binding site" evidence="2">
    <location>
        <position position="406"/>
    </location>
    <ligand>
        <name>Ca(2+)</name>
        <dbReference type="ChEBI" id="CHEBI:29108"/>
        <label>1</label>
    </ligand>
</feature>
<feature type="binding site" evidence="2">
    <location>
        <position position="406"/>
    </location>
    <ligand>
        <name>Ca(2+)</name>
        <dbReference type="ChEBI" id="CHEBI:29108"/>
        <label>2</label>
    </ligand>
</feature>
<feature type="binding site" evidence="2">
    <location>
        <position position="406"/>
    </location>
    <ligand>
        <name>Ca(2+)</name>
        <dbReference type="ChEBI" id="CHEBI:29108"/>
        <label>3</label>
    </ligand>
</feature>
<feature type="binding site" evidence="2">
    <location>
        <position position="408"/>
    </location>
    <ligand>
        <name>Ca(2+)</name>
        <dbReference type="ChEBI" id="CHEBI:29108"/>
        <label>3</label>
    </ligand>
</feature>
<feature type="binding site" evidence="2">
    <location>
        <position position="410"/>
    </location>
    <ligand>
        <name>Ca(2+)</name>
        <dbReference type="ChEBI" id="CHEBI:29108"/>
        <label>3</label>
    </ligand>
</feature>
<feature type="binding site" evidence="2">
    <location>
        <position position="411"/>
    </location>
    <ligand>
        <name>Ca(2+)</name>
        <dbReference type="ChEBI" id="CHEBI:29108"/>
        <label>1</label>
    </ligand>
</feature>
<feature type="modified residue" description="N-acetylmethionine" evidence="20">
    <location>
        <position position="1"/>
    </location>
</feature>
<feature type="modified residue" description="Phosphoserine; by CDK5" evidence="3">
    <location>
        <position position="324"/>
    </location>
</feature>
<feature type="modified residue" description="N6-acetyllysine" evidence="21">
    <location>
        <position position="817"/>
    </location>
</feature>
<feature type="modified residue" description="Phosphoserine" evidence="22 23 24">
    <location>
        <position position="820"/>
    </location>
</feature>
<feature type="modified residue" description="Phosphoserine" evidence="24">
    <location>
        <position position="941"/>
    </location>
</feature>
<feature type="modified residue" description="Phosphothreonine" evidence="24">
    <location>
        <position position="948"/>
    </location>
</feature>
<feature type="modified residue" description="Phosphoserine" evidence="24">
    <location>
        <position position="949"/>
    </location>
</feature>
<feature type="modified residue" description="Phosphoserine" evidence="19 22 23 24">
    <location>
        <position position="963"/>
    </location>
</feature>
<feature type="modified residue" description="Phosphotyrosine" evidence="4">
    <location>
        <position position="1009"/>
    </location>
</feature>
<feature type="modified residue" description="Phosphoserine" evidence="19 23">
    <location>
        <position position="1034"/>
    </location>
</feature>
<feature type="splice variant" id="VSP_018277" description="In isoform 2." evidence="16">
    <original>P</original>
    <variation>PMVTSELYPPQ</variation>
    <location>
        <position position="491"/>
    </location>
</feature>
<feature type="sequence variant" id="VAR_038190" description="In dbSNP:rs35075600.">
    <original>R</original>
    <variation>C</variation>
    <location>
        <position position="764"/>
    </location>
</feature>
<feature type="mutagenesis site" description="No effect on translocation to sites of contact between the endoplasmic reticulum and the cell membrane." evidence="12">
    <original>D</original>
    <variation>A</variation>
    <location>
        <position position="406"/>
    </location>
</feature>
<feature type="mutagenesis site" description="Abolishes location at the cell membrane; when associated with A-675 and 722-A--A-729." evidence="11">
    <original>D</original>
    <variation>A</variation>
    <location>
        <position position="663"/>
    </location>
</feature>
<feature type="mutagenesis site" description="Abolishes location at the cell membrane; when associated with A-675 and 722-A--A-729." evidence="11">
    <original>D</original>
    <variation>A</variation>
    <location>
        <position position="675"/>
    </location>
</feature>
<feature type="mutagenesis site" description="Abolishes location at the cell membrane; when associated with A-663 and A-675." evidence="11">
    <original>DKDLDKDD</original>
    <variation>AKALAKAA</variation>
    <location>
        <begin position="722"/>
        <end position="729"/>
    </location>
</feature>
<feature type="mutagenesis site" description="Loss of translocation to sites of contact between the endoplasmic reticulum and the cell membrane." evidence="12">
    <original>D</original>
    <variation>A</variation>
    <location>
        <position position="724"/>
    </location>
</feature>
<feature type="sequence conflict" description="In Ref. 2; BAF83026." evidence="17" ref="2">
    <original>F</original>
    <variation>L</variation>
    <location>
        <position position="133"/>
    </location>
</feature>
<feature type="sequence conflict" description="In Ref. 2; BAB15139." evidence="17" ref="2">
    <original>D</original>
    <variation>N</variation>
    <location>
        <position position="489"/>
    </location>
</feature>
<feature type="sequence conflict" description="In Ref. 2; BAB15139." evidence="17" ref="2">
    <original>L</original>
    <variation>F</variation>
    <location>
        <position position="738"/>
    </location>
</feature>
<feature type="sequence conflict" description="In Ref. 2; BAF83026." evidence="17" ref="2">
    <original>S</original>
    <variation>R</variation>
    <location>
        <position position="785"/>
    </location>
</feature>
<feature type="sequence conflict" description="In Ref. 2; BAB15139." evidence="17" ref="2">
    <original>L</original>
    <variation>P</variation>
    <location>
        <position position="998"/>
    </location>
</feature>
<accession>Q9BSJ8</accession>
<accession>A0FGR7</accession>
<accession>A8K2S2</accession>
<accession>O94848</accession>
<accession>Q6PJN4</accession>
<accession>Q9H6J1</accession>
<accession>Q9H6W2</accession>
<accession>Q9Y416</accession>
<comment type="function">
    <text evidence="2 11 12 14">Binds calcium (via the C2 domains) and translocates to sites of contact between the endoplasmic reticulum and the cell membrane in response to increased cytosolic calcium levels (PubMed:23791178, PubMed:24183667). Helps tether the endoplasmic reticulum to the cell membrane and promotes the formation of appositions between the endoplasmic reticulum and the cell membrane (PubMed:24183667). Acts as an inhibitor of ADGRD1 G-protein-coupled receptor activity in absence of cytosolic calcium (PubMed:38758649). Binds glycerophospholipids in a barrel-like domain and may play a role in cellular lipid transport (By similarity).</text>
</comment>
<comment type="subunit">
    <text evidence="3 11 14">Interacts with ESYT2 and ESYT3 (PubMed:23791178). Interacts with ADGRD1; inhibiting the G-protein-coupled receptor activity of ADGRD1 (PubMed:38758649). Interaction with ADGRD1 is abolished when cytosolic calcium increases, relieving ADGRD1 G-protein-coupled receptor activity (PubMed:38758649). Interacts (phosphorylated form) with SLC2A4 (By similarity).</text>
</comment>
<comment type="interaction">
    <interactant intactId="EBI-355956">
        <id>Q9BSJ8</id>
    </interactant>
    <interactant intactId="EBI-355956">
        <id>Q9BSJ8</id>
        <label>ESYT1</label>
    </interactant>
    <organismsDiffer>false</organismsDiffer>
    <experiments>2</experiments>
</comment>
<comment type="interaction">
    <interactant intactId="EBI-355956">
        <id>Q9BSJ8</id>
    </interactant>
    <interactant intactId="EBI-3184170">
        <id>A0FGR8</id>
        <label>ESYT2</label>
    </interactant>
    <organismsDiffer>false</organismsDiffer>
    <experiments>7</experiments>
</comment>
<comment type="interaction">
    <interactant intactId="EBI-355956">
        <id>Q9BSJ8</id>
    </interactant>
    <interactant intactId="EBI-8771391">
        <id>A0FGR9</id>
        <label>ESYT3</label>
    </interactant>
    <organismsDiffer>false</organismsDiffer>
    <experiments>4</experiments>
</comment>
<comment type="interaction">
    <interactant intactId="EBI-355956">
        <id>Q9BSJ8</id>
    </interactant>
    <interactant intactId="EBI-3940292">
        <id>P22309</id>
        <label>UGT1A1</label>
    </interactant>
    <organismsDiffer>false</organismsDiffer>
    <experiments>2</experiments>
</comment>
<comment type="interaction">
    <interactant intactId="EBI-355956">
        <id>Q9BSJ8</id>
    </interactant>
    <interactant intactId="EBI-347088">
        <id>P63104</id>
        <label>YWHAZ</label>
    </interactant>
    <organismsDiffer>false</organismsDiffer>
    <experiments>2</experiments>
</comment>
<comment type="subcellular location">
    <subcellularLocation>
        <location evidence="13">Endoplasmic reticulum membrane</location>
        <topology evidence="5">Multi-pass membrane protein</topology>
    </subcellularLocation>
    <subcellularLocation>
        <location evidence="13">Cell membrane</location>
        <topology evidence="13">Peripheral membrane protein</topology>
    </subcellularLocation>
    <text evidence="10 13">Localizes primarily to the endoplasmic reticulum (PubMed:29469807). Recruited to sites of contact between the endoplasmic reticulum and the cell membrane in response to increased cytosolic calcium levels (PubMed:22250200, PubMed:29469807).</text>
</comment>
<comment type="alternative products">
    <event type="alternative splicing"/>
    <isoform>
        <id>Q9BSJ8-1</id>
        <name>1</name>
        <sequence type="displayed"/>
    </isoform>
    <isoform>
        <id>Q9BSJ8-2</id>
        <name>2</name>
        <sequence type="described" ref="VSP_018277"/>
    </isoform>
</comment>
<comment type="tissue specificity">
    <text evidence="9">Widely expressed.</text>
</comment>
<comment type="domain">
    <text evidence="11">Anchored to the endoplasmic reticulum membrane by a transmembrane hairpin structure; both N-terminus and C-terminus are cytoplasmic.</text>
</comment>
<comment type="domain">
    <text evidence="1">The C2 domains mediate lipid and calcium binding. The N-terminal C2 domain binds calcium ions and is important for calcium-dependent lipid binding and interaction with membranes. Two calcium ions are bound at a high-affinity site and a third calcium ion is bound with lower affinity. May bind up to four calcium ions. In contrast, the second C2 domain apparently does not bind calcium (By similarity). The third C2 domain mediates interaction with membranes enriched in phosphatidylinositol 4,5-bisphosphate and is required for translocation to the cell membrane in response to increased cytosolic calcium levels (PubMed:23791178, PubMed:24183667).</text>
</comment>
<comment type="domain">
    <text evidence="2">The SMP-LTD domain is a barrel-like domain that can bind various types of glycerophospholipids in its interior (By similarity).</text>
</comment>
<comment type="PTM">
    <text evidence="1">Phosphorylated on Ser residues in insulin-treated adipocytes (in vitro); this promotes interaction with SLC2A4.</text>
</comment>
<comment type="similarity">
    <text evidence="17">Belongs to the extended synaptotagmin family.</text>
</comment>
<comment type="sequence caution" evidence="17">
    <conflict type="erroneous initiation">
        <sequence resource="EMBL-CDS" id="BAB15139"/>
    </conflict>
    <text>Truncated N-terminus.</text>
</comment>
<comment type="sequence caution" evidence="17">
    <conflict type="erroneous initiation">
        <sequence resource="EMBL-CDS" id="BAB15268"/>
    </conflict>
    <text>Truncated N-terminus.</text>
</comment>
<proteinExistence type="evidence at protein level"/>
<dbReference type="EMBL" id="DQ993200">
    <property type="protein sequence ID" value="ABJ97705.1"/>
    <property type="molecule type" value="mRNA"/>
</dbReference>
<dbReference type="EMBL" id="AK025463">
    <property type="protein sequence ID" value="BAB15139.1"/>
    <property type="status" value="ALT_INIT"/>
    <property type="molecule type" value="mRNA"/>
</dbReference>
<dbReference type="EMBL" id="AK025878">
    <property type="protein sequence ID" value="BAB15268.1"/>
    <property type="status" value="ALT_INIT"/>
    <property type="molecule type" value="mRNA"/>
</dbReference>
<dbReference type="EMBL" id="AK290337">
    <property type="protein sequence ID" value="BAF83026.1"/>
    <property type="molecule type" value="mRNA"/>
</dbReference>
<dbReference type="EMBL" id="CH471054">
    <property type="protein sequence ID" value="EAW96891.1"/>
    <property type="molecule type" value="Genomic_DNA"/>
</dbReference>
<dbReference type="EMBL" id="BC004998">
    <property type="protein sequence ID" value="AAH04998.1"/>
    <property type="molecule type" value="mRNA"/>
</dbReference>
<dbReference type="EMBL" id="AB018290">
    <property type="protein sequence ID" value="BAA34467.1"/>
    <property type="molecule type" value="mRNA"/>
</dbReference>
<dbReference type="EMBL" id="AL050134">
    <property type="protein sequence ID" value="CAB43284.1"/>
    <property type="molecule type" value="mRNA"/>
</dbReference>
<dbReference type="CCDS" id="CCDS53801.1">
    <molecule id="Q9BSJ8-2"/>
</dbReference>
<dbReference type="CCDS" id="CCDS8904.1">
    <molecule id="Q9BSJ8-1"/>
</dbReference>
<dbReference type="PIR" id="T08769">
    <property type="entry name" value="T08769"/>
</dbReference>
<dbReference type="PIR" id="T13156">
    <property type="entry name" value="T13156"/>
</dbReference>
<dbReference type="RefSeq" id="NP_001171725.1">
    <molecule id="Q9BSJ8-2"/>
    <property type="nucleotide sequence ID" value="NM_001184796.2"/>
</dbReference>
<dbReference type="RefSeq" id="NP_056107.1">
    <molecule id="Q9BSJ8-1"/>
    <property type="nucleotide sequence ID" value="NM_015292.3"/>
</dbReference>
<dbReference type="SMR" id="Q9BSJ8"/>
<dbReference type="BioGRID" id="116927">
    <property type="interactions" value="461"/>
</dbReference>
<dbReference type="CORUM" id="Q9BSJ8"/>
<dbReference type="DIP" id="DIP-57197N"/>
<dbReference type="ELM" id="Q9BSJ8"/>
<dbReference type="FunCoup" id="Q9BSJ8">
    <property type="interactions" value="1533"/>
</dbReference>
<dbReference type="IntAct" id="Q9BSJ8">
    <property type="interactions" value="144"/>
</dbReference>
<dbReference type="MINT" id="Q9BSJ8"/>
<dbReference type="STRING" id="9606.ENSP00000267113"/>
<dbReference type="ChEMBL" id="CHEMBL3621033"/>
<dbReference type="TCDB" id="9.A.57.1.1">
    <property type="family name" value="the extended-synaptotagmin (e-syt) family"/>
</dbReference>
<dbReference type="GlyCosmos" id="Q9BSJ8">
    <property type="glycosylation" value="1 site, 2 glycans"/>
</dbReference>
<dbReference type="GlyGen" id="Q9BSJ8">
    <property type="glycosylation" value="2 sites, 2 O-linked glycans (2 sites)"/>
</dbReference>
<dbReference type="iPTMnet" id="Q9BSJ8"/>
<dbReference type="PhosphoSitePlus" id="Q9BSJ8"/>
<dbReference type="SwissPalm" id="Q9BSJ8"/>
<dbReference type="BioMuta" id="ESYT1"/>
<dbReference type="DMDM" id="74733019"/>
<dbReference type="OGP" id="Q9Y416"/>
<dbReference type="CPTAC" id="CPTAC-198"/>
<dbReference type="CPTAC" id="CPTAC-199"/>
<dbReference type="jPOST" id="Q9BSJ8"/>
<dbReference type="MassIVE" id="Q9BSJ8"/>
<dbReference type="PaxDb" id="9606-ENSP00000267113"/>
<dbReference type="PeptideAtlas" id="Q9BSJ8"/>
<dbReference type="ProteomicsDB" id="78906">
    <molecule id="Q9BSJ8-1"/>
</dbReference>
<dbReference type="ProteomicsDB" id="78907">
    <molecule id="Q9BSJ8-2"/>
</dbReference>
<dbReference type="Pumba" id="Q9BSJ8"/>
<dbReference type="Antibodypedia" id="3015">
    <property type="antibodies" value="237 antibodies from 32 providers"/>
</dbReference>
<dbReference type="DNASU" id="23344"/>
<dbReference type="Ensembl" id="ENST00000267113.4">
    <molecule id="Q9BSJ8-2"/>
    <property type="protein sequence ID" value="ENSP00000267113.4"/>
    <property type="gene ID" value="ENSG00000139641.13"/>
</dbReference>
<dbReference type="Ensembl" id="ENST00000394048.10">
    <molecule id="Q9BSJ8-1"/>
    <property type="protein sequence ID" value="ENSP00000377612.5"/>
    <property type="gene ID" value="ENSG00000139641.13"/>
</dbReference>
<dbReference type="GeneID" id="23344"/>
<dbReference type="KEGG" id="hsa:23344"/>
<dbReference type="MANE-Select" id="ENST00000394048.10">
    <property type="protein sequence ID" value="ENSP00000377612.5"/>
    <property type="RefSeq nucleotide sequence ID" value="NM_015292.3"/>
    <property type="RefSeq protein sequence ID" value="NP_056107.1"/>
</dbReference>
<dbReference type="UCSC" id="uc001sjq.4">
    <molecule id="Q9BSJ8-1"/>
    <property type="organism name" value="human"/>
</dbReference>
<dbReference type="AGR" id="HGNC:29534"/>
<dbReference type="CTD" id="23344"/>
<dbReference type="DisGeNET" id="23344"/>
<dbReference type="GeneCards" id="ESYT1"/>
<dbReference type="HGNC" id="HGNC:29534">
    <property type="gene designation" value="ESYT1"/>
</dbReference>
<dbReference type="HPA" id="ENSG00000139641">
    <property type="expression patterns" value="Low tissue specificity"/>
</dbReference>
<dbReference type="neXtProt" id="NX_Q9BSJ8"/>
<dbReference type="OpenTargets" id="ENSG00000139641"/>
<dbReference type="PharmGKB" id="PA165512688"/>
<dbReference type="VEuPathDB" id="HostDB:ENSG00000139641"/>
<dbReference type="eggNOG" id="KOG1012">
    <property type="taxonomic scope" value="Eukaryota"/>
</dbReference>
<dbReference type="GeneTree" id="ENSGT00940000156561"/>
<dbReference type="HOGENOM" id="CLU_012047_0_0_1"/>
<dbReference type="InParanoid" id="Q9BSJ8"/>
<dbReference type="OMA" id="KVHPGQS"/>
<dbReference type="OrthoDB" id="1029639at2759"/>
<dbReference type="PAN-GO" id="Q9BSJ8">
    <property type="GO annotations" value="7 GO annotations based on evolutionary models"/>
</dbReference>
<dbReference type="PhylomeDB" id="Q9BSJ8"/>
<dbReference type="TreeFam" id="TF324255"/>
<dbReference type="PathwayCommons" id="Q9BSJ8"/>
<dbReference type="Reactome" id="R-HSA-9013149">
    <property type="pathway name" value="RAC1 GTPase cycle"/>
</dbReference>
<dbReference type="Reactome" id="R-HSA-9013404">
    <property type="pathway name" value="RAC2 GTPase cycle"/>
</dbReference>
<dbReference type="Reactome" id="R-HSA-9013405">
    <property type="pathway name" value="RHOD GTPase cycle"/>
</dbReference>
<dbReference type="Reactome" id="R-HSA-9013408">
    <property type="pathway name" value="RHOG GTPase cycle"/>
</dbReference>
<dbReference type="Reactome" id="R-HSA-9013423">
    <property type="pathway name" value="RAC3 GTPase cycle"/>
</dbReference>
<dbReference type="Reactome" id="R-HSA-9035034">
    <property type="pathway name" value="RHOF GTPase cycle"/>
</dbReference>
<dbReference type="Reactome" id="R-HSA-9845576">
    <property type="pathway name" value="Glycosphingolipid transport"/>
</dbReference>
<dbReference type="SignaLink" id="Q9BSJ8"/>
<dbReference type="BioGRID-ORCS" id="23344">
    <property type="hits" value="8 hits in 1149 CRISPR screens"/>
</dbReference>
<dbReference type="CD-CODE" id="91857CE7">
    <property type="entry name" value="Nucleolus"/>
</dbReference>
<dbReference type="CD-CODE" id="DEE660B4">
    <property type="entry name" value="Stress granule"/>
</dbReference>
<dbReference type="CD-CODE" id="FB4E32DD">
    <property type="entry name" value="Presynaptic clusters and postsynaptic densities"/>
</dbReference>
<dbReference type="ChiTaRS" id="ESYT1">
    <property type="organism name" value="human"/>
</dbReference>
<dbReference type="GeneWiki" id="FAM62A"/>
<dbReference type="GenomeRNAi" id="23344"/>
<dbReference type="Pharos" id="Q9BSJ8">
    <property type="development level" value="Tbio"/>
</dbReference>
<dbReference type="PRO" id="PR:Q9BSJ8"/>
<dbReference type="Proteomes" id="UP000005640">
    <property type="component" value="Chromosome 12"/>
</dbReference>
<dbReference type="RNAct" id="Q9BSJ8">
    <property type="molecule type" value="protein"/>
</dbReference>
<dbReference type="Bgee" id="ENSG00000139641">
    <property type="expression patterns" value="Expressed in adipose tissue of abdominal region and 207 other cell types or tissues"/>
</dbReference>
<dbReference type="ExpressionAtlas" id="Q9BSJ8">
    <property type="expression patterns" value="baseline and differential"/>
</dbReference>
<dbReference type="GO" id="GO:0005783">
    <property type="term" value="C:endoplasmic reticulum"/>
    <property type="evidence" value="ECO:0000314"/>
    <property type="project" value="HPA"/>
</dbReference>
<dbReference type="GO" id="GO:0005789">
    <property type="term" value="C:endoplasmic reticulum membrane"/>
    <property type="evidence" value="ECO:0000314"/>
    <property type="project" value="UniProtKB"/>
</dbReference>
<dbReference type="GO" id="GO:0016020">
    <property type="term" value="C:membrane"/>
    <property type="evidence" value="ECO:0007005"/>
    <property type="project" value="UniProtKB"/>
</dbReference>
<dbReference type="GO" id="GO:0005886">
    <property type="term" value="C:plasma membrane"/>
    <property type="evidence" value="ECO:0007669"/>
    <property type="project" value="UniProtKB-SubCell"/>
</dbReference>
<dbReference type="GO" id="GO:0005509">
    <property type="term" value="F:calcium ion binding"/>
    <property type="evidence" value="ECO:0000318"/>
    <property type="project" value="GO_Central"/>
</dbReference>
<dbReference type="GO" id="GO:0005544">
    <property type="term" value="F:calcium-dependent phospholipid binding"/>
    <property type="evidence" value="ECO:0000318"/>
    <property type="project" value="GO_Central"/>
</dbReference>
<dbReference type="GO" id="GO:0042802">
    <property type="term" value="F:identical protein binding"/>
    <property type="evidence" value="ECO:0000353"/>
    <property type="project" value="IntAct"/>
</dbReference>
<dbReference type="GO" id="GO:0031210">
    <property type="term" value="F:phosphatidylcholine binding"/>
    <property type="evidence" value="ECO:0000318"/>
    <property type="project" value="GO_Central"/>
</dbReference>
<dbReference type="GO" id="GO:0008429">
    <property type="term" value="F:phosphatidylethanolamine binding"/>
    <property type="evidence" value="ECO:0000318"/>
    <property type="project" value="GO_Central"/>
</dbReference>
<dbReference type="GO" id="GO:0035091">
    <property type="term" value="F:phosphatidylinositol binding"/>
    <property type="evidence" value="ECO:0000318"/>
    <property type="project" value="GO_Central"/>
</dbReference>
<dbReference type="GO" id="GO:0120014">
    <property type="term" value="F:phospholipid transfer activity"/>
    <property type="evidence" value="ECO:0000314"/>
    <property type="project" value="UniProtKB"/>
</dbReference>
<dbReference type="GO" id="GO:0061817">
    <property type="term" value="P:endoplasmic reticulum-plasma membrane tethering"/>
    <property type="evidence" value="ECO:0007669"/>
    <property type="project" value="InterPro"/>
</dbReference>
<dbReference type="GO" id="GO:0120009">
    <property type="term" value="P:intermembrane lipid transfer"/>
    <property type="evidence" value="ECO:0000314"/>
    <property type="project" value="UniProtKB"/>
</dbReference>
<dbReference type="CDD" id="cd08391">
    <property type="entry name" value="C2A_C2C_Synaptotagmin_like"/>
    <property type="match status" value="2"/>
</dbReference>
<dbReference type="CDD" id="cd04050">
    <property type="entry name" value="C2B_Synaptotagmin-like"/>
    <property type="match status" value="2"/>
</dbReference>
<dbReference type="CDD" id="cd04030">
    <property type="entry name" value="C2C_KIAA1228"/>
    <property type="match status" value="1"/>
</dbReference>
<dbReference type="CDD" id="cd21679">
    <property type="entry name" value="SMP_ESyt1"/>
    <property type="match status" value="1"/>
</dbReference>
<dbReference type="FunFam" id="2.60.40.150:FF:000025">
    <property type="entry name" value="Extended synaptotagmin 2"/>
    <property type="match status" value="1"/>
</dbReference>
<dbReference type="FunFam" id="2.60.40.150:FF:000106">
    <property type="entry name" value="extended synaptotagmin-1 isoform X1"/>
    <property type="match status" value="1"/>
</dbReference>
<dbReference type="FunFam" id="2.60.40.150:FF:000120">
    <property type="entry name" value="extended synaptotagmin-1 isoform X1"/>
    <property type="match status" value="1"/>
</dbReference>
<dbReference type="FunFam" id="2.60.40.150:FF:000124">
    <property type="entry name" value="extended synaptotagmin-1 isoform X1"/>
    <property type="match status" value="1"/>
</dbReference>
<dbReference type="FunFam" id="2.60.40.150:FF:000139">
    <property type="entry name" value="extended synaptotagmin-1 isoform X1"/>
    <property type="match status" value="1"/>
</dbReference>
<dbReference type="Gene3D" id="2.60.40.150">
    <property type="entry name" value="C2 domain"/>
    <property type="match status" value="5"/>
</dbReference>
<dbReference type="InterPro" id="IPR000008">
    <property type="entry name" value="C2_dom"/>
</dbReference>
<dbReference type="InterPro" id="IPR035892">
    <property type="entry name" value="C2_domain_sf"/>
</dbReference>
<dbReference type="InterPro" id="IPR037752">
    <property type="entry name" value="C2C_KIAA1228"/>
</dbReference>
<dbReference type="InterPro" id="IPR037733">
    <property type="entry name" value="Ext_Synaptotagmin_C2A"/>
</dbReference>
<dbReference type="InterPro" id="IPR037749">
    <property type="entry name" value="Ext_Synaptotagmin_C2B"/>
</dbReference>
<dbReference type="InterPro" id="IPR051634">
    <property type="entry name" value="Extended_Synaptotagmin"/>
</dbReference>
<dbReference type="InterPro" id="IPR031468">
    <property type="entry name" value="SMP_LBD"/>
</dbReference>
<dbReference type="InterPro" id="IPR039010">
    <property type="entry name" value="Synaptotagmin_SMP"/>
</dbReference>
<dbReference type="PANTHER" id="PTHR45761:SF3">
    <property type="entry name" value="EXTENDED SYNAPTOTAGMIN-1"/>
    <property type="match status" value="1"/>
</dbReference>
<dbReference type="PANTHER" id="PTHR45761">
    <property type="entry name" value="EXTENDED SYNAPTOTAGMIN-LIKE PROTEIN 2, ISOFORM C"/>
    <property type="match status" value="1"/>
</dbReference>
<dbReference type="Pfam" id="PF00168">
    <property type="entry name" value="C2"/>
    <property type="match status" value="5"/>
</dbReference>
<dbReference type="Pfam" id="PF17047">
    <property type="entry name" value="SMP_LBD"/>
    <property type="match status" value="1"/>
</dbReference>
<dbReference type="PRINTS" id="PR00360">
    <property type="entry name" value="C2DOMAIN"/>
</dbReference>
<dbReference type="SMART" id="SM00239">
    <property type="entry name" value="C2"/>
    <property type="match status" value="5"/>
</dbReference>
<dbReference type="SUPFAM" id="SSF49562">
    <property type="entry name" value="C2 domain (Calcium/lipid-binding domain, CaLB)"/>
    <property type="match status" value="5"/>
</dbReference>
<dbReference type="PROSITE" id="PS50004">
    <property type="entry name" value="C2"/>
    <property type="match status" value="5"/>
</dbReference>
<dbReference type="PROSITE" id="PS51847">
    <property type="entry name" value="SMP"/>
    <property type="match status" value="1"/>
</dbReference>
<evidence type="ECO:0000250" key="1"/>
<evidence type="ECO:0000250" key="2">
    <source>
        <dbReference type="UniProtKB" id="A0FGR8"/>
    </source>
</evidence>
<evidence type="ECO:0000250" key="3">
    <source>
        <dbReference type="UniProtKB" id="Q3U7R1"/>
    </source>
</evidence>
<evidence type="ECO:0000250" key="4">
    <source>
        <dbReference type="UniProtKB" id="Q9Z1X1"/>
    </source>
</evidence>
<evidence type="ECO:0000255" key="5"/>
<evidence type="ECO:0000255" key="6">
    <source>
        <dbReference type="PROSITE-ProRule" id="PRU00041"/>
    </source>
</evidence>
<evidence type="ECO:0000255" key="7">
    <source>
        <dbReference type="PROSITE-ProRule" id="PRU01194"/>
    </source>
</evidence>
<evidence type="ECO:0000256" key="8">
    <source>
        <dbReference type="SAM" id="MobiDB-lite"/>
    </source>
</evidence>
<evidence type="ECO:0000269" key="9">
    <source>
    </source>
</evidence>
<evidence type="ECO:0000269" key="10">
    <source>
    </source>
</evidence>
<evidence type="ECO:0000269" key="11">
    <source>
    </source>
</evidence>
<evidence type="ECO:0000269" key="12">
    <source>
    </source>
</evidence>
<evidence type="ECO:0000269" key="13">
    <source>
    </source>
</evidence>
<evidence type="ECO:0000269" key="14">
    <source>
    </source>
</evidence>
<evidence type="ECO:0000303" key="15">
    <source>
    </source>
</evidence>
<evidence type="ECO:0000303" key="16">
    <source>
    </source>
</evidence>
<evidence type="ECO:0000305" key="17"/>
<evidence type="ECO:0000312" key="18">
    <source>
        <dbReference type="HGNC" id="HGNC:29534"/>
    </source>
</evidence>
<evidence type="ECO:0007744" key="19">
    <source>
    </source>
</evidence>
<evidence type="ECO:0007744" key="20">
    <source>
    </source>
</evidence>
<evidence type="ECO:0007744" key="21">
    <source>
    </source>
</evidence>
<evidence type="ECO:0007744" key="22">
    <source>
    </source>
</evidence>
<evidence type="ECO:0007744" key="23">
    <source>
    </source>
</evidence>
<evidence type="ECO:0007744" key="24">
    <source>
    </source>
</evidence>
<gene>
    <name evidence="18" type="primary">ESYT1</name>
    <name type="synonym">FAM62A</name>
    <name type="synonym">KIAA0747</name>
    <name type="synonym">MBC2</name>
</gene>
<sequence>MERSPGEGPSPSPMDQPSAPSDPTDQPPAAHAKPDPGSGGQPAGPGAAGEALAVLTSFGRRLLVLIPVYLAGAVGLSVGFVLFGLALYLGWRRVRDEKERSLRAARQLLDDEEQLTAKTLYMSHRELPAWVSFPDVEKAEWLNKIVAQVWPFLGQYMEKLLAETVAPAVRGSNPHLQTFTFTRVELGEKPLRIIGVKVHPGQRKEQILLDLNISYVGDVQIDVEVKKYFCKAGVKGMQLHGVLRVILEPLIGDLPFVGAVSMFFIRRPTLDINWTGMTNLLDIPGLSSLSDTMIMDSIAAFLVLPNRLLVPLVPDLQDVAQLRSPLPRGIIRIHLLAARGLSSKDKYVKGLIEGKSDPYALVRLGTQTFCSRVIDEELNPQWGETYEVMVHEVPGQEIEVEVFDKDPDKDDFLGRMKLDVGKVLQASVLDDWFPLQGGQGQVHLRLEWLSLLSDAEKLEQVLQWNWGVSSRPDPPSAAILVVYLDRAQDLPLKKGNKEPNPMVQLSIQDVTQESKAVYSTNCPVWEEAFRFFLQDPQSQELDVQVKDDSRALTLGALTLPLARLLTAPELILDQWFQLSSSGPNSRLYMKLVMRILYLDSSEICFPTVPGCPGAWDVDSENPQRGSSVDAPPRPCHTTPDSQFGTEHVLRIHVLEAQDLIAKDRFLGGLVKGKSDPYVKLKLAGRSFRSHVVREDLNPRWNEVFEVIVTSVPGQELEVEVFDKDLDKDDFLGRCKVRLTTVLNSGFLDEWLTLEDVPSGRLHLRLERLTPRPTAAELEEVLQVNSLIQTQKSAELAAALLSIYMERAEDLPLRKGTKHLSPYATLTVGDSSHKTKTISQTSAPVWDESASFLIRKPHTESLELQVRGEGTGVLGSLSLPLSELLVADQLCLDRWFTLSSGQGQVLLRAQLGILVSQHSGVEAHSHSYSHSSSSLSEEPELSGGPPHITSSAPELRQRLTHVDSPLEAPAGPLGQVKLTLWYYSEERKLVSIVHGCRSLRQNGRDPPDPYVSLLLLPDKNRGTKRRTSQKKRTLSPEFNERFEWELPLDEAQRRKLDVSVKSNSSFMSRERELLGKVQLDLAETDLSQGVARWYDLMDNKDKGSS</sequence>